<keyword id="KW-0029">Amino-acid transport</keyword>
<keyword id="KW-0903">Direct protein sequencing</keyword>
<keyword id="KW-1015">Disulfide bond</keyword>
<keyword id="KW-0574">Periplasm</keyword>
<keyword id="KW-1185">Reference proteome</keyword>
<keyword id="KW-0732">Signal</keyword>
<keyword id="KW-0813">Transport</keyword>
<name>LIVJ_SALTY</name>
<gene>
    <name type="primary">livJ</name>
    <name type="synonym">livB</name>
    <name type="ordered locus">STM3567</name>
</gene>
<protein>
    <recommendedName>
        <fullName>Leu/Ile/Val/Thr-binding protein</fullName>
        <shortName>LIVT-BP</shortName>
    </recommendedName>
</protein>
<evidence type="ECO:0000250" key="1"/>
<evidence type="ECO:0000305" key="2"/>
<comment type="function">
    <text evidence="1">This protein is a component of the leucine, isoleucine, valine, threonine transport system, which is one of the two periplasmic binding protein-dependent transport systems of the high-affinity transport of the branched-chain amino acids.</text>
</comment>
<comment type="subcellular location">
    <subcellularLocation>
        <location evidence="1">Periplasm</location>
    </subcellularLocation>
</comment>
<comment type="similarity">
    <text evidence="2">Belongs to the leucine-binding protein family.</text>
</comment>
<sequence>MKGKTLLAGCIALSLSHMAFADDIKVAVVGAMSGPVAQYGDQEFTGAEQAIADINAKGGIKGDKLVAVKYDDACDPKQAVAVANKVVNDGIKYVIGHLCSSSTQPASDIYEDEGILMITPAATAPELTARGYKLVLRTTGLDSDQGPTAAKYILEKVKPQRIAIIHDKQQYGEGLARAVQDGLKKGGVNVVFFDGITAGEKDFSTLVARLKKENIDFVYYGGYHPEMGQILRQSRAAGLKTQFMGPEGVANVSLSNIAGESAEGLLVTKPKNYDQVPANKPIVDAIKAKKQDPSGAFVWTTYAALQSLQAGLNHSDDPAEIAKYLKGATVDTVMGPLSWDEKGDLKGFEFGVFDWHANGTATDAK</sequence>
<accession>P17215</accession>
<proteinExistence type="evidence at protein level"/>
<dbReference type="EMBL" id="D00478">
    <property type="protein sequence ID" value="BAA00369.1"/>
    <property type="molecule type" value="Genomic_DNA"/>
</dbReference>
<dbReference type="EMBL" id="AE006468">
    <property type="protein sequence ID" value="AAL22427.1"/>
    <property type="molecule type" value="Genomic_DNA"/>
</dbReference>
<dbReference type="PIR" id="JU0128">
    <property type="entry name" value="JU0128"/>
</dbReference>
<dbReference type="RefSeq" id="NP_462468.1">
    <property type="nucleotide sequence ID" value="NC_003197.2"/>
</dbReference>
<dbReference type="RefSeq" id="WP_000676957.1">
    <property type="nucleotide sequence ID" value="NC_003197.2"/>
</dbReference>
<dbReference type="SMR" id="P17215"/>
<dbReference type="STRING" id="99287.STM3567"/>
<dbReference type="PaxDb" id="99287-STM3567"/>
<dbReference type="GeneID" id="1255090"/>
<dbReference type="KEGG" id="stm:STM3567"/>
<dbReference type="PATRIC" id="fig|99287.12.peg.3770"/>
<dbReference type="HOGENOM" id="CLU_027128_6_0_6"/>
<dbReference type="OMA" id="MEFTGAR"/>
<dbReference type="PhylomeDB" id="P17215"/>
<dbReference type="BioCyc" id="SENT99287:STM3567-MONOMER"/>
<dbReference type="Proteomes" id="UP000001014">
    <property type="component" value="Chromosome"/>
</dbReference>
<dbReference type="GO" id="GO:0030288">
    <property type="term" value="C:outer membrane-bounded periplasmic space"/>
    <property type="evidence" value="ECO:0000318"/>
    <property type="project" value="GO_Central"/>
</dbReference>
<dbReference type="GO" id="GO:0015818">
    <property type="term" value="P:isoleucine transport"/>
    <property type="evidence" value="ECO:0000318"/>
    <property type="project" value="GO_Central"/>
</dbReference>
<dbReference type="GO" id="GO:0015820">
    <property type="term" value="P:L-leucine transport"/>
    <property type="evidence" value="ECO:0000318"/>
    <property type="project" value="GO_Central"/>
</dbReference>
<dbReference type="GO" id="GO:0015829">
    <property type="term" value="P:valine transport"/>
    <property type="evidence" value="ECO:0000318"/>
    <property type="project" value="GO_Central"/>
</dbReference>
<dbReference type="CDD" id="cd06342">
    <property type="entry name" value="PBP1_ABC_LIVBP-like"/>
    <property type="match status" value="1"/>
</dbReference>
<dbReference type="FunFam" id="3.40.50.2300:FF:000033">
    <property type="entry name" value="Amino acid ABC transporter substrate-binding protein"/>
    <property type="match status" value="1"/>
</dbReference>
<dbReference type="Gene3D" id="3.40.50.2300">
    <property type="match status" value="2"/>
</dbReference>
<dbReference type="InterPro" id="IPR028081">
    <property type="entry name" value="Leu-bd"/>
</dbReference>
<dbReference type="InterPro" id="IPR000709">
    <property type="entry name" value="Leu_Ile_Val-bd"/>
</dbReference>
<dbReference type="InterPro" id="IPR028082">
    <property type="entry name" value="Peripla_BP_I"/>
</dbReference>
<dbReference type="NCBIfam" id="NF011933">
    <property type="entry name" value="PRK15404.1"/>
    <property type="match status" value="1"/>
</dbReference>
<dbReference type="PANTHER" id="PTHR47151">
    <property type="entry name" value="LEU/ILE/VAL-BINDING ABC TRANSPORTER SUBUNIT"/>
    <property type="match status" value="1"/>
</dbReference>
<dbReference type="PANTHER" id="PTHR47151:SF1">
    <property type="entry name" value="LEU_ILE_VAL-BINDING PROTEIN"/>
    <property type="match status" value="1"/>
</dbReference>
<dbReference type="Pfam" id="PF13458">
    <property type="entry name" value="Peripla_BP_6"/>
    <property type="match status" value="1"/>
</dbReference>
<dbReference type="PRINTS" id="PR00337">
    <property type="entry name" value="LEUILEVALBP"/>
</dbReference>
<dbReference type="SUPFAM" id="SSF53822">
    <property type="entry name" value="Periplasmic binding protein-like I"/>
    <property type="match status" value="1"/>
</dbReference>
<feature type="signal peptide">
    <location>
        <begin position="1"/>
        <end position="21"/>
    </location>
</feature>
<feature type="chain" id="PRO_0000017701" description="Leu/Ile/Val/Thr-binding protein">
    <location>
        <begin position="22"/>
        <end position="365"/>
    </location>
</feature>
<feature type="disulfide bond" evidence="1">
    <location>
        <begin position="74"/>
        <end position="99"/>
    </location>
</feature>
<reference key="1">
    <citation type="journal article" date="1990" name="J. Biochem.">
        <title>Cloning and nucleotide sequences of livB and livC, the structural genes encoding binding proteins of the high-affinity branched-chain amino acid transport in Salmonella typhimurium.</title>
        <authorList>
            <person name="Ohnishi K."/>
            <person name="Nakazima A."/>
            <person name="Matsubara K."/>
            <person name="Kiritani K."/>
        </authorList>
    </citation>
    <scope>NUCLEOTIDE SEQUENCE [GENOMIC DNA]</scope>
    <scope>PROTEIN SEQUENCE OF 23-36</scope>
    <source>
        <strain>LT2</strain>
    </source>
</reference>
<reference key="2">
    <citation type="journal article" date="2001" name="Nature">
        <title>Complete genome sequence of Salmonella enterica serovar Typhimurium LT2.</title>
        <authorList>
            <person name="McClelland M."/>
            <person name="Sanderson K.E."/>
            <person name="Spieth J."/>
            <person name="Clifton S.W."/>
            <person name="Latreille P."/>
            <person name="Courtney L."/>
            <person name="Porwollik S."/>
            <person name="Ali J."/>
            <person name="Dante M."/>
            <person name="Du F."/>
            <person name="Hou S."/>
            <person name="Layman D."/>
            <person name="Leonard S."/>
            <person name="Nguyen C."/>
            <person name="Scott K."/>
            <person name="Holmes A."/>
            <person name="Grewal N."/>
            <person name="Mulvaney E."/>
            <person name="Ryan E."/>
            <person name="Sun H."/>
            <person name="Florea L."/>
            <person name="Miller W."/>
            <person name="Stoneking T."/>
            <person name="Nhan M."/>
            <person name="Waterston R."/>
            <person name="Wilson R.K."/>
        </authorList>
    </citation>
    <scope>NUCLEOTIDE SEQUENCE [LARGE SCALE GENOMIC DNA]</scope>
    <source>
        <strain>LT2 / SGSC1412 / ATCC 700720</strain>
    </source>
</reference>
<organism>
    <name type="scientific">Salmonella typhimurium (strain LT2 / SGSC1412 / ATCC 700720)</name>
    <dbReference type="NCBI Taxonomy" id="99287"/>
    <lineage>
        <taxon>Bacteria</taxon>
        <taxon>Pseudomonadati</taxon>
        <taxon>Pseudomonadota</taxon>
        <taxon>Gammaproteobacteria</taxon>
        <taxon>Enterobacterales</taxon>
        <taxon>Enterobacteriaceae</taxon>
        <taxon>Salmonella</taxon>
    </lineage>
</organism>